<comment type="function">
    <text evidence="1">Involved in DNA repair and in homologous recombination. Binds and assemble on single-stranded DNA to form a nucleoprotein filament. Hydrolyzes ATP in a ssDNA-dependent manner and promotes DNA strand exchange between homologous DNA molecules.</text>
</comment>
<comment type="similarity">
    <text evidence="1">Belongs to the eukaryotic RecA-like protein family.</text>
</comment>
<dbReference type="EMBL" id="AF354749">
    <property type="protein sequence ID" value="AAL73354.1"/>
    <property type="molecule type" value="Genomic_DNA"/>
</dbReference>
<dbReference type="EMBL" id="AE009441">
    <property type="protein sequence ID" value="AAL62924.1"/>
    <property type="molecule type" value="Genomic_DNA"/>
</dbReference>
<dbReference type="RefSeq" id="WP_011007396.1">
    <property type="nucleotide sequence ID" value="NC_003364.1"/>
</dbReference>
<dbReference type="SMR" id="Q8ZYR9"/>
<dbReference type="FunCoup" id="Q8ZYR9">
    <property type="interactions" value="140"/>
</dbReference>
<dbReference type="STRING" id="178306.PAE0654"/>
<dbReference type="EnsemblBacteria" id="AAL62924">
    <property type="protein sequence ID" value="AAL62924"/>
    <property type="gene ID" value="PAE0654"/>
</dbReference>
<dbReference type="GeneID" id="1465149"/>
<dbReference type="KEGG" id="pai:PAE0654"/>
<dbReference type="PATRIC" id="fig|178306.9.peg.470"/>
<dbReference type="eggNOG" id="arCOG00415">
    <property type="taxonomic scope" value="Archaea"/>
</dbReference>
<dbReference type="HOGENOM" id="CLU_041732_0_0_2"/>
<dbReference type="InParanoid" id="Q8ZYR9"/>
<dbReference type="Proteomes" id="UP000002439">
    <property type="component" value="Chromosome"/>
</dbReference>
<dbReference type="GO" id="GO:0005524">
    <property type="term" value="F:ATP binding"/>
    <property type="evidence" value="ECO:0007669"/>
    <property type="project" value="UniProtKB-UniRule"/>
</dbReference>
<dbReference type="GO" id="GO:0016887">
    <property type="term" value="F:ATP hydrolysis activity"/>
    <property type="evidence" value="ECO:0007669"/>
    <property type="project" value="InterPro"/>
</dbReference>
<dbReference type="GO" id="GO:0140664">
    <property type="term" value="F:ATP-dependent DNA damage sensor activity"/>
    <property type="evidence" value="ECO:0007669"/>
    <property type="project" value="InterPro"/>
</dbReference>
<dbReference type="GO" id="GO:0003684">
    <property type="term" value="F:damaged DNA binding"/>
    <property type="evidence" value="ECO:0007669"/>
    <property type="project" value="UniProtKB-UniRule"/>
</dbReference>
<dbReference type="GO" id="GO:0006310">
    <property type="term" value="P:DNA recombination"/>
    <property type="evidence" value="ECO:0007669"/>
    <property type="project" value="UniProtKB-UniRule"/>
</dbReference>
<dbReference type="GO" id="GO:0006281">
    <property type="term" value="P:DNA repair"/>
    <property type="evidence" value="ECO:0007669"/>
    <property type="project" value="UniProtKB-UniRule"/>
</dbReference>
<dbReference type="CDD" id="cd19515">
    <property type="entry name" value="archRadA"/>
    <property type="match status" value="1"/>
</dbReference>
<dbReference type="FunFam" id="3.40.50.300:FF:002052">
    <property type="entry name" value="DNA repair protein RAD51 homolog"/>
    <property type="match status" value="1"/>
</dbReference>
<dbReference type="Gene3D" id="1.10.150.20">
    <property type="entry name" value="5' to 3' exonuclease, C-terminal subdomain"/>
    <property type="match status" value="1"/>
</dbReference>
<dbReference type="Gene3D" id="3.40.50.300">
    <property type="entry name" value="P-loop containing nucleotide triphosphate hydrolases"/>
    <property type="match status" value="1"/>
</dbReference>
<dbReference type="HAMAP" id="MF_00348">
    <property type="entry name" value="RadA_arch"/>
    <property type="match status" value="1"/>
</dbReference>
<dbReference type="InterPro" id="IPR003593">
    <property type="entry name" value="AAA+_ATPase"/>
</dbReference>
<dbReference type="InterPro" id="IPR013632">
    <property type="entry name" value="DNA_recomb/repair_Rad51_C"/>
</dbReference>
<dbReference type="InterPro" id="IPR011938">
    <property type="entry name" value="DNA_recomb/repair_RadA"/>
</dbReference>
<dbReference type="InterPro" id="IPR016467">
    <property type="entry name" value="DNA_recomb/repair_RecA-like"/>
</dbReference>
<dbReference type="InterPro" id="IPR010995">
    <property type="entry name" value="DNA_repair_Rad51/TF_NusA_a-hlx"/>
</dbReference>
<dbReference type="InterPro" id="IPR027417">
    <property type="entry name" value="P-loop_NTPase"/>
</dbReference>
<dbReference type="InterPro" id="IPR020588">
    <property type="entry name" value="RecA_ATP-bd"/>
</dbReference>
<dbReference type="InterPro" id="IPR020587">
    <property type="entry name" value="RecA_monomer-monomer_interface"/>
</dbReference>
<dbReference type="NCBIfam" id="NF003301">
    <property type="entry name" value="PRK04301.1"/>
    <property type="match status" value="1"/>
</dbReference>
<dbReference type="NCBIfam" id="TIGR02236">
    <property type="entry name" value="recomb_radA"/>
    <property type="match status" value="1"/>
</dbReference>
<dbReference type="PANTHER" id="PTHR22942:SF30">
    <property type="entry name" value="MEIOTIC RECOMBINATION PROTEIN DMC1_LIM15 HOMOLOG"/>
    <property type="match status" value="1"/>
</dbReference>
<dbReference type="PANTHER" id="PTHR22942">
    <property type="entry name" value="RECA/RAD51/RADA DNA STRAND-PAIRING FAMILY MEMBER"/>
    <property type="match status" value="1"/>
</dbReference>
<dbReference type="Pfam" id="PF14520">
    <property type="entry name" value="HHH_5"/>
    <property type="match status" value="1"/>
</dbReference>
<dbReference type="Pfam" id="PF08423">
    <property type="entry name" value="Rad51"/>
    <property type="match status" value="1"/>
</dbReference>
<dbReference type="PIRSF" id="PIRSF005856">
    <property type="entry name" value="Rad51"/>
    <property type="match status" value="1"/>
</dbReference>
<dbReference type="SMART" id="SM00382">
    <property type="entry name" value="AAA"/>
    <property type="match status" value="1"/>
</dbReference>
<dbReference type="SUPFAM" id="SSF52540">
    <property type="entry name" value="P-loop containing nucleoside triphosphate hydrolases"/>
    <property type="match status" value="1"/>
</dbReference>
<dbReference type="SUPFAM" id="SSF47794">
    <property type="entry name" value="Rad51 N-terminal domain-like"/>
    <property type="match status" value="1"/>
</dbReference>
<dbReference type="PROSITE" id="PS50162">
    <property type="entry name" value="RECA_2"/>
    <property type="match status" value="1"/>
</dbReference>
<dbReference type="PROSITE" id="PS50163">
    <property type="entry name" value="RECA_3"/>
    <property type="match status" value="1"/>
</dbReference>
<accession>Q8ZYR9</accession>
<reference key="1">
    <citation type="journal article" date="2001" name="J. Mol. Biol.">
        <title>Leaderless transcripts of the crenarchaeal hyperthermophile Pyrobaculum aerophilum.</title>
        <authorList>
            <person name="Slupska M.M."/>
            <person name="King A.G."/>
            <person name="Fitz-Gibbon S."/>
            <person name="Besemer J."/>
            <person name="Borodovsky M."/>
            <person name="Miller J.H."/>
        </authorList>
    </citation>
    <scope>NUCLEOTIDE SEQUENCE [GENOMIC DNA]</scope>
    <source>
        <strain>ATCC 51768 / DSM 7523 / JCM 9630 / CIP 104966 / NBRC 100827 / IM2</strain>
    </source>
</reference>
<reference key="2">
    <citation type="journal article" date="2002" name="Proc. Natl. Acad. Sci. U.S.A.">
        <title>Genome sequence of the hyperthermophilic crenarchaeon Pyrobaculum aerophilum.</title>
        <authorList>
            <person name="Fitz-Gibbon S.T."/>
            <person name="Ladner H."/>
            <person name="Kim U.-J."/>
            <person name="Stetter K.O."/>
            <person name="Simon M.I."/>
            <person name="Miller J.H."/>
        </authorList>
    </citation>
    <scope>NUCLEOTIDE SEQUENCE [LARGE SCALE GENOMIC DNA]</scope>
    <source>
        <strain>ATCC 51768 / DSM 7523 / JCM 9630 / CIP 104966 / NBRC 100827 / IM2</strain>
    </source>
</reference>
<keyword id="KW-0067">ATP-binding</keyword>
<keyword id="KW-0227">DNA damage</keyword>
<keyword id="KW-0233">DNA recombination</keyword>
<keyword id="KW-0238">DNA-binding</keyword>
<keyword id="KW-0547">Nucleotide-binding</keyword>
<keyword id="KW-1185">Reference proteome</keyword>
<gene>
    <name evidence="1" type="primary">radA</name>
    <name type="ordered locus">PAE0654</name>
</gene>
<organism>
    <name type="scientific">Pyrobaculum aerophilum (strain ATCC 51768 / DSM 7523 / JCM 9630 / CIP 104966 / NBRC 100827 / IM2)</name>
    <dbReference type="NCBI Taxonomy" id="178306"/>
    <lineage>
        <taxon>Archaea</taxon>
        <taxon>Thermoproteota</taxon>
        <taxon>Thermoprotei</taxon>
        <taxon>Thermoproteales</taxon>
        <taxon>Thermoproteaceae</taxon>
        <taxon>Pyrobaculum</taxon>
    </lineage>
</organism>
<evidence type="ECO:0000255" key="1">
    <source>
        <dbReference type="HAMAP-Rule" id="MF_00348"/>
    </source>
</evidence>
<protein>
    <recommendedName>
        <fullName evidence="1">DNA repair and recombination protein RadA</fullName>
    </recommendedName>
</protein>
<proteinExistence type="inferred from homology"/>
<sequence>MSSKKKKADAEVSQTQATVEVRADVDVEELEGIGRVTGAKLKERGYYTVRDIAFASVKELAEIIGNEDRAQQIIEAARKMLGLHSFISALEVYERRKKIRRISTGVRSLDELLGGGIETRAVTEIVGEFGSGKTQLCHQLAVMVQLPEERGGLGAKAIYIDTENTFRPERIMQIAKARGLDSDQALHNIFYARAYSSDHQMILVEQAKSIIKQHNVALLVVDSVIAHFRSEFPGRENLAERQQKLNKHVADLLRLADAYDVAVVITNQVMAQPDVFFGNPLRPAGGNILAHGATYRLWLRKSKENIRIAKIFDSPYHPEGEVSFRITEEGLVD</sequence>
<feature type="chain" id="PRO_0000150103" description="DNA repair and recombination protein RadA">
    <location>
        <begin position="1"/>
        <end position="333"/>
    </location>
</feature>
<feature type="binding site" evidence="1">
    <location>
        <begin position="127"/>
        <end position="134"/>
    </location>
    <ligand>
        <name>ATP</name>
        <dbReference type="ChEBI" id="CHEBI:30616"/>
    </ligand>
</feature>
<name>RADA_PYRAE</name>